<dbReference type="EC" id="5.1.3.22" evidence="1"/>
<dbReference type="EMBL" id="CU928145">
    <property type="protein sequence ID" value="CAV01691.1"/>
    <property type="molecule type" value="Genomic_DNA"/>
</dbReference>
<dbReference type="RefSeq" id="WP_000949539.1">
    <property type="nucleotide sequence ID" value="NC_011748.1"/>
</dbReference>
<dbReference type="SMR" id="B7LCQ7"/>
<dbReference type="GeneID" id="75202431"/>
<dbReference type="KEGG" id="eck:EC55989_4754"/>
<dbReference type="HOGENOM" id="CLU_082738_0_0_6"/>
<dbReference type="UniPathway" id="UPA00263">
    <property type="reaction ID" value="UER00379"/>
</dbReference>
<dbReference type="Proteomes" id="UP000000746">
    <property type="component" value="Chromosome"/>
</dbReference>
<dbReference type="GO" id="GO:0016861">
    <property type="term" value="F:intramolecular oxidoreductase activity, interconverting aldoses and ketoses"/>
    <property type="evidence" value="ECO:0007669"/>
    <property type="project" value="InterPro"/>
</dbReference>
<dbReference type="GO" id="GO:0034015">
    <property type="term" value="F:L-ribulose-5-phosphate 3-epimerase activity"/>
    <property type="evidence" value="ECO:0007669"/>
    <property type="project" value="UniProtKB-UniRule"/>
</dbReference>
<dbReference type="GO" id="GO:0019854">
    <property type="term" value="P:L-ascorbic acid catabolic process"/>
    <property type="evidence" value="ECO:0007669"/>
    <property type="project" value="UniProtKB-UniRule"/>
</dbReference>
<dbReference type="FunFam" id="3.20.20.150:FF:000003">
    <property type="entry name" value="L-ribulose-5-phosphate 3-epimerase UlaE"/>
    <property type="match status" value="1"/>
</dbReference>
<dbReference type="Gene3D" id="3.20.20.150">
    <property type="entry name" value="Divalent-metal-dependent TIM barrel enzymes"/>
    <property type="match status" value="1"/>
</dbReference>
<dbReference type="HAMAP" id="MF_01951">
    <property type="entry name" value="UlaE"/>
    <property type="match status" value="1"/>
</dbReference>
<dbReference type="InterPro" id="IPR004560">
    <property type="entry name" value="L-Ru-5P_3-Epase"/>
</dbReference>
<dbReference type="InterPro" id="IPR023492">
    <property type="entry name" value="L-Ru-5P_3-Epase_Enterobacteria"/>
</dbReference>
<dbReference type="InterPro" id="IPR050417">
    <property type="entry name" value="Sugar_Epim/Isomerase"/>
</dbReference>
<dbReference type="InterPro" id="IPR036237">
    <property type="entry name" value="Xyl_isomerase-like_sf"/>
</dbReference>
<dbReference type="InterPro" id="IPR013022">
    <property type="entry name" value="Xyl_isomerase-like_TIM-brl"/>
</dbReference>
<dbReference type="NCBIfam" id="TIGR00542">
    <property type="entry name" value="hxl6Piso_put"/>
    <property type="match status" value="1"/>
</dbReference>
<dbReference type="NCBIfam" id="NF009688">
    <property type="entry name" value="PRK13209.1"/>
    <property type="match status" value="1"/>
</dbReference>
<dbReference type="NCBIfam" id="NF009689">
    <property type="entry name" value="PRK13210.1"/>
    <property type="match status" value="1"/>
</dbReference>
<dbReference type="PANTHER" id="PTHR43489">
    <property type="entry name" value="ISOMERASE"/>
    <property type="match status" value="1"/>
</dbReference>
<dbReference type="PANTHER" id="PTHR43489:SF8">
    <property type="entry name" value="L-RIBULOSE-5-PHOSPHATE 3-EPIMERASE ULAE"/>
    <property type="match status" value="1"/>
</dbReference>
<dbReference type="Pfam" id="PF01261">
    <property type="entry name" value="AP_endonuc_2"/>
    <property type="match status" value="1"/>
</dbReference>
<dbReference type="SUPFAM" id="SSF51658">
    <property type="entry name" value="Xylose isomerase-like"/>
    <property type="match status" value="1"/>
</dbReference>
<protein>
    <recommendedName>
        <fullName evidence="1">L-ribulose-5-phosphate 3-epimerase UlaE</fullName>
        <ecNumber evidence="1">5.1.3.22</ecNumber>
    </recommendedName>
    <alternativeName>
        <fullName evidence="1">L-ascorbate utilization protein E</fullName>
    </alternativeName>
    <alternativeName>
        <fullName evidence="1">L-xylulose-5-phosphate 3-epimerase</fullName>
    </alternativeName>
</protein>
<proteinExistence type="inferred from homology"/>
<gene>
    <name evidence="1" type="primary">ulaE</name>
    <name type="ordered locus">EC55989_4754</name>
</gene>
<sequence>MLSKQIPLGIYEKALPAGECWLERLRLAKTLGFDFVEMSVDETDERLSRLDWSREQRLALVNAIVETGVRVPSMCLSAHRRFPLGSEDDAVRAQGLEIMRKAIQFAQDVGIRVIQLAGYDVYYQEANNETRRRFRDGLKESVEMASRAQVTLAMEIMDYPLMNSISKALGYAHYLNNPWFQLYPDIGNLSAWDNDVQMELQAGIGHIVAVHVKDTKPGVFKNVPFGEGVVDFERCFETLKQSGYCGPYLIEMWSETAEDPAAEVAKARDWVKARMAKAGMVEAA</sequence>
<name>ULAE_ECO55</name>
<evidence type="ECO:0000255" key="1">
    <source>
        <dbReference type="HAMAP-Rule" id="MF_01951"/>
    </source>
</evidence>
<feature type="chain" id="PRO_1000188822" description="L-ribulose-5-phosphate 3-epimerase UlaE">
    <location>
        <begin position="1"/>
        <end position="284"/>
    </location>
</feature>
<reference key="1">
    <citation type="journal article" date="2009" name="PLoS Genet.">
        <title>Organised genome dynamics in the Escherichia coli species results in highly diverse adaptive paths.</title>
        <authorList>
            <person name="Touchon M."/>
            <person name="Hoede C."/>
            <person name="Tenaillon O."/>
            <person name="Barbe V."/>
            <person name="Baeriswyl S."/>
            <person name="Bidet P."/>
            <person name="Bingen E."/>
            <person name="Bonacorsi S."/>
            <person name="Bouchier C."/>
            <person name="Bouvet O."/>
            <person name="Calteau A."/>
            <person name="Chiapello H."/>
            <person name="Clermont O."/>
            <person name="Cruveiller S."/>
            <person name="Danchin A."/>
            <person name="Diard M."/>
            <person name="Dossat C."/>
            <person name="Karoui M.E."/>
            <person name="Frapy E."/>
            <person name="Garry L."/>
            <person name="Ghigo J.M."/>
            <person name="Gilles A.M."/>
            <person name="Johnson J."/>
            <person name="Le Bouguenec C."/>
            <person name="Lescat M."/>
            <person name="Mangenot S."/>
            <person name="Martinez-Jehanne V."/>
            <person name="Matic I."/>
            <person name="Nassif X."/>
            <person name="Oztas S."/>
            <person name="Petit M.A."/>
            <person name="Pichon C."/>
            <person name="Rouy Z."/>
            <person name="Ruf C.S."/>
            <person name="Schneider D."/>
            <person name="Tourret J."/>
            <person name="Vacherie B."/>
            <person name="Vallenet D."/>
            <person name="Medigue C."/>
            <person name="Rocha E.P.C."/>
            <person name="Denamur E."/>
        </authorList>
    </citation>
    <scope>NUCLEOTIDE SEQUENCE [LARGE SCALE GENOMIC DNA]</scope>
    <source>
        <strain>55989 / EAEC</strain>
    </source>
</reference>
<accession>B7LCQ7</accession>
<keyword id="KW-0413">Isomerase</keyword>
<keyword id="KW-1185">Reference proteome</keyword>
<organism>
    <name type="scientific">Escherichia coli (strain 55989 / EAEC)</name>
    <dbReference type="NCBI Taxonomy" id="585055"/>
    <lineage>
        <taxon>Bacteria</taxon>
        <taxon>Pseudomonadati</taxon>
        <taxon>Pseudomonadota</taxon>
        <taxon>Gammaproteobacteria</taxon>
        <taxon>Enterobacterales</taxon>
        <taxon>Enterobacteriaceae</taxon>
        <taxon>Escherichia</taxon>
    </lineage>
</organism>
<comment type="function">
    <text evidence="1">Catalyzes the isomerization of L-xylulose-5-phosphate to L-ribulose-5-phosphate. Is involved in the anaerobic L-ascorbate utilization.</text>
</comment>
<comment type="catalytic activity">
    <reaction evidence="1">
        <text>L-ribulose 5-phosphate = L-xylulose 5-phosphate</text>
        <dbReference type="Rhea" id="RHEA:18497"/>
        <dbReference type="ChEBI" id="CHEBI:57829"/>
        <dbReference type="ChEBI" id="CHEBI:58226"/>
        <dbReference type="EC" id="5.1.3.22"/>
    </reaction>
</comment>
<comment type="pathway">
    <text evidence="1">Cofactor degradation; L-ascorbate degradation; D-xylulose 5-phosphate from L-ascorbate: step 3/4.</text>
</comment>
<comment type="induction">
    <text evidence="1">Induced by L-ascorbate. Repressed by UlaR.</text>
</comment>
<comment type="similarity">
    <text evidence="1">Belongs to the L-ribulose-5-phosphate 3-epimerase family.</text>
</comment>